<accession>B0SRS0</accession>
<proteinExistence type="inferred from homology"/>
<keyword id="KW-0131">Cell cycle</keyword>
<keyword id="KW-0132">Cell division</keyword>
<keyword id="KW-0997">Cell inner membrane</keyword>
<keyword id="KW-1003">Cell membrane</keyword>
<keyword id="KW-0133">Cell shape</keyword>
<keyword id="KW-0961">Cell wall biogenesis/degradation</keyword>
<keyword id="KW-0460">Magnesium</keyword>
<keyword id="KW-0472">Membrane</keyword>
<keyword id="KW-0479">Metal-binding</keyword>
<keyword id="KW-0573">Peptidoglycan synthesis</keyword>
<keyword id="KW-1185">Reference proteome</keyword>
<keyword id="KW-0808">Transferase</keyword>
<keyword id="KW-0812">Transmembrane</keyword>
<keyword id="KW-1133">Transmembrane helix</keyword>
<organism>
    <name type="scientific">Leptospira biflexa serovar Patoc (strain Patoc 1 / ATCC 23582 / Paris)</name>
    <dbReference type="NCBI Taxonomy" id="456481"/>
    <lineage>
        <taxon>Bacteria</taxon>
        <taxon>Pseudomonadati</taxon>
        <taxon>Spirochaetota</taxon>
        <taxon>Spirochaetia</taxon>
        <taxon>Leptospirales</taxon>
        <taxon>Leptospiraceae</taxon>
        <taxon>Leptospira</taxon>
    </lineage>
</organism>
<comment type="function">
    <text evidence="1">Catalyzes the initial step of the lipid cycle reactions in the biosynthesis of the cell wall peptidoglycan: transfers peptidoglycan precursor phospho-MurNAc-pentapeptide from UDP-MurNAc-pentapeptide onto the lipid carrier undecaprenyl phosphate, yielding undecaprenyl-pyrophosphoryl-MurNAc-pentapeptide, known as lipid I.</text>
</comment>
<comment type="catalytic activity">
    <reaction evidence="1">
        <text>UDP-N-acetyl-alpha-D-muramoyl-L-alanyl-gamma-D-glutamyl-meso-2,6-diaminopimeloyl-D-alanyl-D-alanine + di-trans,octa-cis-undecaprenyl phosphate = di-trans,octa-cis-undecaprenyl diphospho-N-acetyl-alpha-D-muramoyl-L-alanyl-D-glutamyl-meso-2,6-diaminopimeloyl-D-alanyl-D-alanine + UMP</text>
        <dbReference type="Rhea" id="RHEA:28386"/>
        <dbReference type="ChEBI" id="CHEBI:57865"/>
        <dbReference type="ChEBI" id="CHEBI:60392"/>
        <dbReference type="ChEBI" id="CHEBI:61386"/>
        <dbReference type="ChEBI" id="CHEBI:61387"/>
        <dbReference type="EC" id="2.7.8.13"/>
    </reaction>
</comment>
<comment type="cofactor">
    <cofactor evidence="1">
        <name>Mg(2+)</name>
        <dbReference type="ChEBI" id="CHEBI:18420"/>
    </cofactor>
</comment>
<comment type="pathway">
    <text evidence="1">Cell wall biogenesis; peptidoglycan biosynthesis.</text>
</comment>
<comment type="subcellular location">
    <subcellularLocation>
        <location evidence="1">Cell inner membrane</location>
        <topology evidence="1">Multi-pass membrane protein</topology>
    </subcellularLocation>
</comment>
<comment type="similarity">
    <text evidence="1">Belongs to the glycosyltransferase 4 family. MraY subfamily.</text>
</comment>
<evidence type="ECO:0000255" key="1">
    <source>
        <dbReference type="HAMAP-Rule" id="MF_00038"/>
    </source>
</evidence>
<sequence length="370" mass="40503">MFQWIYESFGNDYGFLRVFSYVTLRAMMAGLTSMFITFIFGKSLISFLLSLKFRESVRNDGPQSHANKSGTPTMGGLIMILSLTISTLLWGNLSNWNVILLLISAILFAGLGFTDDYMKSVKKIKGGMRARTKFIVTILFAVTITTLYFYYTGKSNVNLQKGIVFSITDLFLPFVKGPVWNLGIFAVPFAIIVLIGSSHAVNLTDGLDGLASGTVVISTATFALIAYVSGTPSAANYLHIPYLPGSHEYSVFLAGLSGALLGFLWFNCHPAQVFMGDTGSLFLGSTLGLVAIMLKKEILLVILGGIFVAEAVSVILQVGSFKLTGKRIFKMAPLHHHFELSGWSEEKVVIRFWIIGIILAIITLSTLKIQ</sequence>
<name>MRAY_LEPBP</name>
<gene>
    <name evidence="1" type="primary">mraY</name>
    <name type="ordered locus">LEPBI_I1759</name>
</gene>
<protein>
    <recommendedName>
        <fullName evidence="1">Phospho-N-acetylmuramoyl-pentapeptide-transferase</fullName>
        <ecNumber evidence="1">2.7.8.13</ecNumber>
    </recommendedName>
    <alternativeName>
        <fullName evidence="1">UDP-MurNAc-pentapeptide phosphotransferase</fullName>
    </alternativeName>
</protein>
<reference key="1">
    <citation type="journal article" date="2008" name="PLoS ONE">
        <title>Genome sequence of the saprophyte Leptospira biflexa provides insights into the evolution of Leptospira and the pathogenesis of leptospirosis.</title>
        <authorList>
            <person name="Picardeau M."/>
            <person name="Bulach D.M."/>
            <person name="Bouchier C."/>
            <person name="Zuerner R.L."/>
            <person name="Zidane N."/>
            <person name="Wilson P.J."/>
            <person name="Creno S."/>
            <person name="Kuczek E.S."/>
            <person name="Bommezzadri S."/>
            <person name="Davis J.C."/>
            <person name="McGrath A."/>
            <person name="Johnson M.J."/>
            <person name="Boursaux-Eude C."/>
            <person name="Seemann T."/>
            <person name="Rouy Z."/>
            <person name="Coppel R.L."/>
            <person name="Rood J.I."/>
            <person name="Lajus A."/>
            <person name="Davies J.K."/>
            <person name="Medigue C."/>
            <person name="Adler B."/>
        </authorList>
    </citation>
    <scope>NUCLEOTIDE SEQUENCE [LARGE SCALE GENOMIC DNA]</scope>
    <source>
        <strain>Patoc 1 / ATCC 23582 / Paris</strain>
    </source>
</reference>
<dbReference type="EC" id="2.7.8.13" evidence="1"/>
<dbReference type="EMBL" id="CP000786">
    <property type="protein sequence ID" value="ABZ97865.1"/>
    <property type="molecule type" value="Genomic_DNA"/>
</dbReference>
<dbReference type="RefSeq" id="WP_012388743.1">
    <property type="nucleotide sequence ID" value="NC_010602.1"/>
</dbReference>
<dbReference type="SMR" id="B0SRS0"/>
<dbReference type="STRING" id="456481.LEPBI_I1759"/>
<dbReference type="KEGG" id="lbi:LEPBI_I1759"/>
<dbReference type="HOGENOM" id="CLU_023982_0_0_12"/>
<dbReference type="OrthoDB" id="9805475at2"/>
<dbReference type="BioCyc" id="LBIF456481:LEPBI_RS08690-MONOMER"/>
<dbReference type="UniPathway" id="UPA00219"/>
<dbReference type="Proteomes" id="UP000001847">
    <property type="component" value="Chromosome I"/>
</dbReference>
<dbReference type="GO" id="GO:0005886">
    <property type="term" value="C:plasma membrane"/>
    <property type="evidence" value="ECO:0007669"/>
    <property type="project" value="UniProtKB-SubCell"/>
</dbReference>
<dbReference type="GO" id="GO:0046872">
    <property type="term" value="F:metal ion binding"/>
    <property type="evidence" value="ECO:0007669"/>
    <property type="project" value="UniProtKB-KW"/>
</dbReference>
<dbReference type="GO" id="GO:0008963">
    <property type="term" value="F:phospho-N-acetylmuramoyl-pentapeptide-transferase activity"/>
    <property type="evidence" value="ECO:0007669"/>
    <property type="project" value="UniProtKB-UniRule"/>
</dbReference>
<dbReference type="GO" id="GO:0051992">
    <property type="term" value="F:UDP-N-acetylmuramoyl-L-alanyl-D-glutamyl-meso-2,6-diaminopimelyl-D-alanyl-D-alanine:undecaprenyl-phosphate transferase activity"/>
    <property type="evidence" value="ECO:0007669"/>
    <property type="project" value="RHEA"/>
</dbReference>
<dbReference type="GO" id="GO:0051301">
    <property type="term" value="P:cell division"/>
    <property type="evidence" value="ECO:0007669"/>
    <property type="project" value="UniProtKB-KW"/>
</dbReference>
<dbReference type="GO" id="GO:0071555">
    <property type="term" value="P:cell wall organization"/>
    <property type="evidence" value="ECO:0007669"/>
    <property type="project" value="UniProtKB-KW"/>
</dbReference>
<dbReference type="GO" id="GO:0009252">
    <property type="term" value="P:peptidoglycan biosynthetic process"/>
    <property type="evidence" value="ECO:0007669"/>
    <property type="project" value="UniProtKB-UniRule"/>
</dbReference>
<dbReference type="GO" id="GO:0008360">
    <property type="term" value="P:regulation of cell shape"/>
    <property type="evidence" value="ECO:0007669"/>
    <property type="project" value="UniProtKB-KW"/>
</dbReference>
<dbReference type="CDD" id="cd06852">
    <property type="entry name" value="GT_MraY"/>
    <property type="match status" value="1"/>
</dbReference>
<dbReference type="HAMAP" id="MF_00038">
    <property type="entry name" value="MraY"/>
    <property type="match status" value="1"/>
</dbReference>
<dbReference type="InterPro" id="IPR000715">
    <property type="entry name" value="Glycosyl_transferase_4"/>
</dbReference>
<dbReference type="InterPro" id="IPR003524">
    <property type="entry name" value="PNAcMuramoyl-5peptid_Trfase"/>
</dbReference>
<dbReference type="InterPro" id="IPR018480">
    <property type="entry name" value="PNAcMuramoyl-5peptid_Trfase_CS"/>
</dbReference>
<dbReference type="NCBIfam" id="TIGR00445">
    <property type="entry name" value="mraY"/>
    <property type="match status" value="1"/>
</dbReference>
<dbReference type="PANTHER" id="PTHR22926">
    <property type="entry name" value="PHOSPHO-N-ACETYLMURAMOYL-PENTAPEPTIDE-TRANSFERASE"/>
    <property type="match status" value="1"/>
</dbReference>
<dbReference type="PANTHER" id="PTHR22926:SF5">
    <property type="entry name" value="PHOSPHO-N-ACETYLMURAMOYL-PENTAPEPTIDE-TRANSFERASE HOMOLOG"/>
    <property type="match status" value="1"/>
</dbReference>
<dbReference type="Pfam" id="PF00953">
    <property type="entry name" value="Glycos_transf_4"/>
    <property type="match status" value="1"/>
</dbReference>
<dbReference type="Pfam" id="PF10555">
    <property type="entry name" value="MraY_sig1"/>
    <property type="match status" value="1"/>
</dbReference>
<dbReference type="PROSITE" id="PS01347">
    <property type="entry name" value="MRAY_1"/>
    <property type="match status" value="1"/>
</dbReference>
<dbReference type="PROSITE" id="PS01348">
    <property type="entry name" value="MRAY_2"/>
    <property type="match status" value="1"/>
</dbReference>
<feature type="chain" id="PRO_1000090639" description="Phospho-N-acetylmuramoyl-pentapeptide-transferase">
    <location>
        <begin position="1"/>
        <end position="370"/>
    </location>
</feature>
<feature type="transmembrane region" description="Helical" evidence="1">
    <location>
        <begin position="29"/>
        <end position="49"/>
    </location>
</feature>
<feature type="transmembrane region" description="Helical" evidence="1">
    <location>
        <begin position="70"/>
        <end position="90"/>
    </location>
</feature>
<feature type="transmembrane region" description="Helical" evidence="1">
    <location>
        <begin position="93"/>
        <end position="113"/>
    </location>
</feature>
<feature type="transmembrane region" description="Helical" evidence="1">
    <location>
        <begin position="133"/>
        <end position="153"/>
    </location>
</feature>
<feature type="transmembrane region" description="Helical" evidence="1">
    <location>
        <begin position="177"/>
        <end position="197"/>
    </location>
</feature>
<feature type="transmembrane region" description="Helical" evidence="1">
    <location>
        <begin position="209"/>
        <end position="229"/>
    </location>
</feature>
<feature type="transmembrane region" description="Helical" evidence="1">
    <location>
        <begin position="251"/>
        <end position="271"/>
    </location>
</feature>
<feature type="transmembrane region" description="Helical" evidence="1">
    <location>
        <begin position="273"/>
        <end position="293"/>
    </location>
</feature>
<feature type="transmembrane region" description="Helical" evidence="1">
    <location>
        <begin position="298"/>
        <end position="318"/>
    </location>
</feature>
<feature type="transmembrane region" description="Helical" evidence="1">
    <location>
        <begin position="349"/>
        <end position="369"/>
    </location>
</feature>